<feature type="chain" id="PRO_1000149718" description="Putative phosphoenolpyruvate synthase regulatory protein">
    <location>
        <begin position="1"/>
        <end position="277"/>
    </location>
</feature>
<feature type="binding site" evidence="1">
    <location>
        <begin position="157"/>
        <end position="164"/>
    </location>
    <ligand>
        <name>ADP</name>
        <dbReference type="ChEBI" id="CHEBI:456216"/>
    </ligand>
</feature>
<sequence>MQMESQRRDVFYVSDGTAITCETLGHVVLGQFAVQPNEKTFPFVESDEKLSELLKQIQRSYQLHGVKPLVFFSMVIPEMRTRLLQAPAHFYDVLESIVQRVSLDIEMEPAPKLQRSRSVGKDSDTYFDRIAAIEYTLAHDDGVSLKDLDRADIILLGVSRSGKTPTSLYMAMQFGLRVVNYPFIAEDMHAMRLLPEFEFHRHKLFGLTINAERLTEIRENRLAGSEYASNQQCQQELATVEALFRREAISYINTSSLSVEEISTRILERTGLKRRLF</sequence>
<dbReference type="EC" id="2.7.11.33" evidence="1"/>
<dbReference type="EC" id="2.7.4.28" evidence="1"/>
<dbReference type="EMBL" id="CP001234">
    <property type="protein sequence ID" value="ACP07904.1"/>
    <property type="molecule type" value="Genomic_DNA"/>
</dbReference>
<dbReference type="RefSeq" id="WP_001177874.1">
    <property type="nucleotide sequence ID" value="NC_012580.1"/>
</dbReference>
<dbReference type="SMR" id="C3LWP9"/>
<dbReference type="KEGG" id="vcm:VCM66_A0945"/>
<dbReference type="HOGENOM" id="CLU_046206_1_0_6"/>
<dbReference type="Proteomes" id="UP000001217">
    <property type="component" value="Chromosome II"/>
</dbReference>
<dbReference type="GO" id="GO:0043531">
    <property type="term" value="F:ADP binding"/>
    <property type="evidence" value="ECO:0007669"/>
    <property type="project" value="UniProtKB-UniRule"/>
</dbReference>
<dbReference type="GO" id="GO:0005524">
    <property type="term" value="F:ATP binding"/>
    <property type="evidence" value="ECO:0007669"/>
    <property type="project" value="InterPro"/>
</dbReference>
<dbReference type="GO" id="GO:0016776">
    <property type="term" value="F:phosphotransferase activity, phosphate group as acceptor"/>
    <property type="evidence" value="ECO:0007669"/>
    <property type="project" value="UniProtKB-UniRule"/>
</dbReference>
<dbReference type="GO" id="GO:0004674">
    <property type="term" value="F:protein serine/threonine kinase activity"/>
    <property type="evidence" value="ECO:0007669"/>
    <property type="project" value="UniProtKB-UniRule"/>
</dbReference>
<dbReference type="HAMAP" id="MF_01062">
    <property type="entry name" value="PSRP"/>
    <property type="match status" value="1"/>
</dbReference>
<dbReference type="InterPro" id="IPR005177">
    <property type="entry name" value="Kinase-pyrophosphorylase"/>
</dbReference>
<dbReference type="InterPro" id="IPR026530">
    <property type="entry name" value="PSRP"/>
</dbReference>
<dbReference type="NCBIfam" id="NF003742">
    <property type="entry name" value="PRK05339.1"/>
    <property type="match status" value="1"/>
</dbReference>
<dbReference type="PANTHER" id="PTHR31756">
    <property type="entry name" value="PYRUVATE, PHOSPHATE DIKINASE REGULATORY PROTEIN 1, CHLOROPLASTIC"/>
    <property type="match status" value="1"/>
</dbReference>
<dbReference type="PANTHER" id="PTHR31756:SF3">
    <property type="entry name" value="PYRUVATE, PHOSPHATE DIKINASE REGULATORY PROTEIN 1, CHLOROPLASTIC"/>
    <property type="match status" value="1"/>
</dbReference>
<dbReference type="Pfam" id="PF03618">
    <property type="entry name" value="Kinase-PPPase"/>
    <property type="match status" value="1"/>
</dbReference>
<gene>
    <name type="ordered locus">VCM66_A0945</name>
</gene>
<organism>
    <name type="scientific">Vibrio cholerae serotype O1 (strain M66-2)</name>
    <dbReference type="NCBI Taxonomy" id="579112"/>
    <lineage>
        <taxon>Bacteria</taxon>
        <taxon>Pseudomonadati</taxon>
        <taxon>Pseudomonadota</taxon>
        <taxon>Gammaproteobacteria</taxon>
        <taxon>Vibrionales</taxon>
        <taxon>Vibrionaceae</taxon>
        <taxon>Vibrio</taxon>
    </lineage>
</organism>
<reference key="1">
    <citation type="journal article" date="2008" name="PLoS ONE">
        <title>A recalibrated molecular clock and independent origins for the cholera pandemic clones.</title>
        <authorList>
            <person name="Feng L."/>
            <person name="Reeves P.R."/>
            <person name="Lan R."/>
            <person name="Ren Y."/>
            <person name="Gao C."/>
            <person name="Zhou Z."/>
            <person name="Ren Y."/>
            <person name="Cheng J."/>
            <person name="Wang W."/>
            <person name="Wang J."/>
            <person name="Qian W."/>
            <person name="Li D."/>
            <person name="Wang L."/>
        </authorList>
    </citation>
    <scope>NUCLEOTIDE SEQUENCE [LARGE SCALE GENOMIC DNA]</scope>
    <source>
        <strain>M66-2</strain>
    </source>
</reference>
<accession>C3LWP9</accession>
<comment type="function">
    <text evidence="1">Bifunctional serine/threonine kinase and phosphorylase involved in the regulation of the phosphoenolpyruvate synthase (PEPS) by catalyzing its phosphorylation/dephosphorylation.</text>
</comment>
<comment type="catalytic activity">
    <reaction evidence="1">
        <text>[pyruvate, water dikinase] + ADP = [pyruvate, water dikinase]-phosphate + AMP + H(+)</text>
        <dbReference type="Rhea" id="RHEA:46020"/>
        <dbReference type="Rhea" id="RHEA-COMP:11425"/>
        <dbReference type="Rhea" id="RHEA-COMP:11426"/>
        <dbReference type="ChEBI" id="CHEBI:15378"/>
        <dbReference type="ChEBI" id="CHEBI:43176"/>
        <dbReference type="ChEBI" id="CHEBI:68546"/>
        <dbReference type="ChEBI" id="CHEBI:456215"/>
        <dbReference type="ChEBI" id="CHEBI:456216"/>
        <dbReference type="EC" id="2.7.11.33"/>
    </reaction>
</comment>
<comment type="catalytic activity">
    <reaction evidence="1">
        <text>[pyruvate, water dikinase]-phosphate + phosphate + H(+) = [pyruvate, water dikinase] + diphosphate</text>
        <dbReference type="Rhea" id="RHEA:48580"/>
        <dbReference type="Rhea" id="RHEA-COMP:11425"/>
        <dbReference type="Rhea" id="RHEA-COMP:11426"/>
        <dbReference type="ChEBI" id="CHEBI:15378"/>
        <dbReference type="ChEBI" id="CHEBI:33019"/>
        <dbReference type="ChEBI" id="CHEBI:43176"/>
        <dbReference type="ChEBI" id="CHEBI:43474"/>
        <dbReference type="ChEBI" id="CHEBI:68546"/>
        <dbReference type="EC" id="2.7.4.28"/>
    </reaction>
</comment>
<comment type="similarity">
    <text evidence="1">Belongs to the pyruvate, phosphate/water dikinase regulatory protein family. PSRP subfamily.</text>
</comment>
<protein>
    <recommendedName>
        <fullName evidence="1">Putative phosphoenolpyruvate synthase regulatory protein</fullName>
        <shortName evidence="1">PEP synthase regulatory protein</shortName>
        <shortName evidence="1">PSRP</shortName>
        <ecNumber evidence="1">2.7.11.33</ecNumber>
        <ecNumber evidence="1">2.7.4.28</ecNumber>
    </recommendedName>
    <alternativeName>
        <fullName evidence="1">Pyruvate, water dikinase regulatory protein</fullName>
    </alternativeName>
</protein>
<evidence type="ECO:0000255" key="1">
    <source>
        <dbReference type="HAMAP-Rule" id="MF_01062"/>
    </source>
</evidence>
<keyword id="KW-0418">Kinase</keyword>
<keyword id="KW-0547">Nucleotide-binding</keyword>
<keyword id="KW-0723">Serine/threonine-protein kinase</keyword>
<keyword id="KW-0808">Transferase</keyword>
<proteinExistence type="inferred from homology"/>
<name>PSRP_VIBCM</name>